<evidence type="ECO:0000250" key="1">
    <source>
        <dbReference type="UniProtKB" id="Q6DRD9"/>
    </source>
</evidence>
<evidence type="ECO:0000255" key="2"/>
<evidence type="ECO:0000269" key="3">
    <source>
    </source>
</evidence>
<evidence type="ECO:0000305" key="4"/>
<evidence type="ECO:0000312" key="5">
    <source>
        <dbReference type="EMBL" id="CAA22555.1"/>
    </source>
</evidence>
<proteinExistence type="inferred from homology"/>
<protein>
    <recommendedName>
        <fullName>Abhydrolase domain-containing protein C22H12.03</fullName>
        <ecNumber>3.1.-.-</ecNumber>
    </recommendedName>
</protein>
<gene>
    <name type="ORF">SPAC22H12.03</name>
</gene>
<organism>
    <name type="scientific">Schizosaccharomyces pombe (strain 972 / ATCC 24843)</name>
    <name type="common">Fission yeast</name>
    <dbReference type="NCBI Taxonomy" id="284812"/>
    <lineage>
        <taxon>Eukaryota</taxon>
        <taxon>Fungi</taxon>
        <taxon>Dikarya</taxon>
        <taxon>Ascomycota</taxon>
        <taxon>Taphrinomycotina</taxon>
        <taxon>Schizosaccharomycetes</taxon>
        <taxon>Schizosaccharomycetales</taxon>
        <taxon>Schizosaccharomycetaceae</taxon>
        <taxon>Schizosaccharomyces</taxon>
    </lineage>
</organism>
<dbReference type="EC" id="3.1.-.-"/>
<dbReference type="EMBL" id="CU329670">
    <property type="protein sequence ID" value="CAA22555.1"/>
    <property type="molecule type" value="Genomic_DNA"/>
</dbReference>
<dbReference type="PIR" id="T38218">
    <property type="entry name" value="T38218"/>
</dbReference>
<dbReference type="RefSeq" id="NP_593115.1">
    <property type="nucleotide sequence ID" value="NM_001018512.2"/>
</dbReference>
<dbReference type="SMR" id="O94437"/>
<dbReference type="FunCoup" id="O94437">
    <property type="interactions" value="345"/>
</dbReference>
<dbReference type="STRING" id="284812.O94437"/>
<dbReference type="ESTHER" id="schpo-C22H12.03">
    <property type="family name" value="ABHD11-Acetyl_transferase"/>
</dbReference>
<dbReference type="iPTMnet" id="O94437"/>
<dbReference type="PaxDb" id="4896-SPAC22H12.03.1"/>
<dbReference type="EnsemblFungi" id="SPAC22H12.03.1">
    <property type="protein sequence ID" value="SPAC22H12.03.1:pep"/>
    <property type="gene ID" value="SPAC22H12.03"/>
</dbReference>
<dbReference type="PomBase" id="SPAC22H12.03"/>
<dbReference type="VEuPathDB" id="FungiDB:SPAC22H12.03"/>
<dbReference type="eggNOG" id="KOG2382">
    <property type="taxonomic scope" value="Eukaryota"/>
</dbReference>
<dbReference type="HOGENOM" id="CLU_020336_53_0_1"/>
<dbReference type="InParanoid" id="O94437"/>
<dbReference type="OMA" id="FLGMSDN"/>
<dbReference type="PhylomeDB" id="O94437"/>
<dbReference type="PRO" id="PR:O94437"/>
<dbReference type="Proteomes" id="UP000002485">
    <property type="component" value="Chromosome I"/>
</dbReference>
<dbReference type="GO" id="GO:0005739">
    <property type="term" value="C:mitochondrion"/>
    <property type="evidence" value="ECO:0007005"/>
    <property type="project" value="PomBase"/>
</dbReference>
<dbReference type="GO" id="GO:0052689">
    <property type="term" value="F:carboxylic ester hydrolase activity"/>
    <property type="evidence" value="ECO:0000318"/>
    <property type="project" value="GO_Central"/>
</dbReference>
<dbReference type="GO" id="GO:0008474">
    <property type="term" value="F:palmitoyl-(protein) hydrolase activity"/>
    <property type="evidence" value="ECO:0000250"/>
    <property type="project" value="PomBase"/>
</dbReference>
<dbReference type="GO" id="GO:0006631">
    <property type="term" value="P:fatty acid metabolic process"/>
    <property type="evidence" value="ECO:0000250"/>
    <property type="project" value="PomBase"/>
</dbReference>
<dbReference type="GO" id="GO:0006629">
    <property type="term" value="P:lipid metabolic process"/>
    <property type="evidence" value="ECO:0000318"/>
    <property type="project" value="GO_Central"/>
</dbReference>
<dbReference type="FunFam" id="3.40.50.1820:FF:000039">
    <property type="entry name" value="Esterase ybfF"/>
    <property type="match status" value="1"/>
</dbReference>
<dbReference type="Gene3D" id="3.40.50.1820">
    <property type="entry name" value="alpha/beta hydrolase"/>
    <property type="match status" value="1"/>
</dbReference>
<dbReference type="InterPro" id="IPR000073">
    <property type="entry name" value="AB_hydrolase_1"/>
</dbReference>
<dbReference type="InterPro" id="IPR029058">
    <property type="entry name" value="AB_hydrolase_fold"/>
</dbReference>
<dbReference type="PANTHER" id="PTHR46118">
    <property type="entry name" value="PROTEIN ABHD11"/>
    <property type="match status" value="1"/>
</dbReference>
<dbReference type="PANTHER" id="PTHR46118:SF4">
    <property type="entry name" value="PROTEIN ABHD11"/>
    <property type="match status" value="1"/>
</dbReference>
<dbReference type="Pfam" id="PF00561">
    <property type="entry name" value="Abhydrolase_1"/>
    <property type="match status" value="1"/>
</dbReference>
<dbReference type="PRINTS" id="PR00111">
    <property type="entry name" value="ABHYDROLASE"/>
</dbReference>
<dbReference type="SUPFAM" id="SSF53474">
    <property type="entry name" value="alpha/beta-Hydrolases"/>
    <property type="match status" value="1"/>
</dbReference>
<keyword id="KW-0378">Hydrolase</keyword>
<keyword id="KW-0496">Mitochondrion</keyword>
<keyword id="KW-1185">Reference proteome</keyword>
<feature type="chain" id="PRO_0000312657" description="Abhydrolase domain-containing protein C22H12.03">
    <location>
        <begin position="1"/>
        <end position="270"/>
    </location>
</feature>
<feature type="domain" description="AB hydrolase-1" evidence="2">
    <location>
        <begin position="21"/>
        <end position="257"/>
    </location>
</feature>
<feature type="active site" description="Charge relay system" evidence="1">
    <location>
        <position position="95"/>
    </location>
</feature>
<feature type="active site" description="Charge relay system" evidence="1">
    <location>
        <position position="190"/>
    </location>
</feature>
<feature type="active site" description="Charge relay system" evidence="1">
    <location>
        <position position="250"/>
    </location>
</feature>
<reference evidence="5" key="1">
    <citation type="journal article" date="2002" name="Nature">
        <title>The genome sequence of Schizosaccharomyces pombe.</title>
        <authorList>
            <person name="Wood V."/>
            <person name="Gwilliam R."/>
            <person name="Rajandream M.A."/>
            <person name="Lyne M.H."/>
            <person name="Lyne R."/>
            <person name="Stewart A."/>
            <person name="Sgouros J.G."/>
            <person name="Peat N."/>
            <person name="Hayles J."/>
            <person name="Baker S.G."/>
            <person name="Basham D."/>
            <person name="Bowman S."/>
            <person name="Brooks K."/>
            <person name="Brown D."/>
            <person name="Brown S."/>
            <person name="Chillingworth T."/>
            <person name="Churcher C.M."/>
            <person name="Collins M."/>
            <person name="Connor R."/>
            <person name="Cronin A."/>
            <person name="Davis P."/>
            <person name="Feltwell T."/>
            <person name="Fraser A."/>
            <person name="Gentles S."/>
            <person name="Goble A."/>
            <person name="Hamlin N."/>
            <person name="Harris D.E."/>
            <person name="Hidalgo J."/>
            <person name="Hodgson G."/>
            <person name="Holroyd S."/>
            <person name="Hornsby T."/>
            <person name="Howarth S."/>
            <person name="Huckle E.J."/>
            <person name="Hunt S."/>
            <person name="Jagels K."/>
            <person name="James K.D."/>
            <person name="Jones L."/>
            <person name="Jones M."/>
            <person name="Leather S."/>
            <person name="McDonald S."/>
            <person name="McLean J."/>
            <person name="Mooney P."/>
            <person name="Moule S."/>
            <person name="Mungall K.L."/>
            <person name="Murphy L.D."/>
            <person name="Niblett D."/>
            <person name="Odell C."/>
            <person name="Oliver K."/>
            <person name="O'Neil S."/>
            <person name="Pearson D."/>
            <person name="Quail M.A."/>
            <person name="Rabbinowitsch E."/>
            <person name="Rutherford K.M."/>
            <person name="Rutter S."/>
            <person name="Saunders D."/>
            <person name="Seeger K."/>
            <person name="Sharp S."/>
            <person name="Skelton J."/>
            <person name="Simmonds M.N."/>
            <person name="Squares R."/>
            <person name="Squares S."/>
            <person name="Stevens K."/>
            <person name="Taylor K."/>
            <person name="Taylor R.G."/>
            <person name="Tivey A."/>
            <person name="Walsh S.V."/>
            <person name="Warren T."/>
            <person name="Whitehead S."/>
            <person name="Woodward J.R."/>
            <person name="Volckaert G."/>
            <person name="Aert R."/>
            <person name="Robben J."/>
            <person name="Grymonprez B."/>
            <person name="Weltjens I."/>
            <person name="Vanstreels E."/>
            <person name="Rieger M."/>
            <person name="Schaefer M."/>
            <person name="Mueller-Auer S."/>
            <person name="Gabel C."/>
            <person name="Fuchs M."/>
            <person name="Duesterhoeft A."/>
            <person name="Fritzc C."/>
            <person name="Holzer E."/>
            <person name="Moestl D."/>
            <person name="Hilbert H."/>
            <person name="Borzym K."/>
            <person name="Langer I."/>
            <person name="Beck A."/>
            <person name="Lehrach H."/>
            <person name="Reinhardt R."/>
            <person name="Pohl T.M."/>
            <person name="Eger P."/>
            <person name="Zimmermann W."/>
            <person name="Wedler H."/>
            <person name="Wambutt R."/>
            <person name="Purnelle B."/>
            <person name="Goffeau A."/>
            <person name="Cadieu E."/>
            <person name="Dreano S."/>
            <person name="Gloux S."/>
            <person name="Lelaure V."/>
            <person name="Mottier S."/>
            <person name="Galibert F."/>
            <person name="Aves S.J."/>
            <person name="Xiang Z."/>
            <person name="Hunt C."/>
            <person name="Moore K."/>
            <person name="Hurst S.M."/>
            <person name="Lucas M."/>
            <person name="Rochet M."/>
            <person name="Gaillardin C."/>
            <person name="Tallada V.A."/>
            <person name="Garzon A."/>
            <person name="Thode G."/>
            <person name="Daga R.R."/>
            <person name="Cruzado L."/>
            <person name="Jimenez J."/>
            <person name="Sanchez M."/>
            <person name="del Rey F."/>
            <person name="Benito J."/>
            <person name="Dominguez A."/>
            <person name="Revuelta J.L."/>
            <person name="Moreno S."/>
            <person name="Armstrong J."/>
            <person name="Forsburg S.L."/>
            <person name="Cerutti L."/>
            <person name="Lowe T."/>
            <person name="McCombie W.R."/>
            <person name="Paulsen I."/>
            <person name="Potashkin J."/>
            <person name="Shpakovski G.V."/>
            <person name="Ussery D."/>
            <person name="Barrell B.G."/>
            <person name="Nurse P."/>
        </authorList>
    </citation>
    <scope>NUCLEOTIDE SEQUENCE [LARGE SCALE GENOMIC DNA]</scope>
    <source>
        <strain>972 / ATCC 24843</strain>
    </source>
</reference>
<reference evidence="4" key="2">
    <citation type="journal article" date="2006" name="Nat. Biotechnol.">
        <title>ORFeome cloning and global analysis of protein localization in the fission yeast Schizosaccharomyces pombe.</title>
        <authorList>
            <person name="Matsuyama A."/>
            <person name="Arai R."/>
            <person name="Yashiroda Y."/>
            <person name="Shirai A."/>
            <person name="Kamata A."/>
            <person name="Sekido S."/>
            <person name="Kobayashi Y."/>
            <person name="Hashimoto A."/>
            <person name="Hamamoto M."/>
            <person name="Hiraoka Y."/>
            <person name="Horinouchi S."/>
            <person name="Yoshida M."/>
        </authorList>
    </citation>
    <scope>SUBCELLULAR LOCATION [LARGE SCALE ANALYSIS]</scope>
</reference>
<accession>O94437</accession>
<sequence length="270" mass="30750">MSLKPVKLAFEKYSATVAKHPPVLIFHGLLGSKRNWRSLAKKFSCKLDRDIYAIDQRCHGDSPCVAPLSYSAMALDAFQFMKDHKLDKASIIGHSMGAKTAMVTALKWPDKVEKLVVVDNSPWYQDLPRDYGAYFRKMIQIDEANITKYSEADKMMSTVEKDILVRSFLLSNLKKDSNNSNTFKFRVPIELISKSLKTIEGFPASLNDLVYDSPTLVIRALKAPFIPDSALPVFKKFFPKYELVSLDCGHWVHFEKPKEFSESIINFLNN</sequence>
<name>YFI3_SCHPO</name>
<comment type="subcellular location">
    <subcellularLocation>
        <location evidence="3">Mitochondrion</location>
    </subcellularLocation>
</comment>
<comment type="similarity">
    <text evidence="2">Belongs to the AB hydrolase superfamily.</text>
</comment>